<reference key="1">
    <citation type="journal article" date="2005" name="Dev. Dyn.">
        <title>Distinct tissue-specificity of three zebrafish ext1 genes encoding proteoglycan modifying enzymes and their relationship to somitic Sonic hedgehog signaling.</title>
        <authorList>
            <person name="Siekmann A.F."/>
            <person name="Brand M."/>
        </authorList>
    </citation>
    <scope>NUCLEOTIDE SEQUENCE [MRNA]</scope>
    <scope>DEVELOPMENTAL STAGE</scope>
</reference>
<gene>
    <name type="primary">ext1b</name>
</gene>
<name>EXT1B_DANRE</name>
<accession>Q5IGR7</accession>
<dbReference type="EC" id="2.4.1.224"/>
<dbReference type="EC" id="2.4.1.225"/>
<dbReference type="EMBL" id="AY734456">
    <property type="protein sequence ID" value="AAW29034.1"/>
    <property type="molecule type" value="mRNA"/>
</dbReference>
<dbReference type="SMR" id="Q5IGR7"/>
<dbReference type="FunCoup" id="Q5IGR7">
    <property type="interactions" value="1490"/>
</dbReference>
<dbReference type="STRING" id="7955.ENSDARP00000131773"/>
<dbReference type="CAZy" id="GT47">
    <property type="family name" value="Glycosyltransferase Family 47"/>
</dbReference>
<dbReference type="CAZy" id="GT64">
    <property type="family name" value="Glycosyltransferase Family 64"/>
</dbReference>
<dbReference type="GlyCosmos" id="Q5IGR7">
    <property type="glycosylation" value="2 sites, No reported glycans"/>
</dbReference>
<dbReference type="PaxDb" id="7955-ENSDARP00000108198"/>
<dbReference type="AGR" id="ZFIN:ZDB-GENE-050211-4"/>
<dbReference type="ZFIN" id="ZDB-GENE-050211-4">
    <property type="gene designation" value="ext1b"/>
</dbReference>
<dbReference type="eggNOG" id="KOG1021">
    <property type="taxonomic scope" value="Eukaryota"/>
</dbReference>
<dbReference type="InParanoid" id="Q5IGR7"/>
<dbReference type="PhylomeDB" id="Q5IGR7"/>
<dbReference type="Reactome" id="R-DRE-2022928">
    <property type="pathway name" value="HS-GAG biosynthesis"/>
</dbReference>
<dbReference type="UniPathway" id="UPA00378"/>
<dbReference type="PRO" id="PR:Q5IGR7"/>
<dbReference type="Proteomes" id="UP000000437">
    <property type="component" value="Unplaced"/>
</dbReference>
<dbReference type="GO" id="GO:0005789">
    <property type="term" value="C:endoplasmic reticulum membrane"/>
    <property type="evidence" value="ECO:0000250"/>
    <property type="project" value="UniProtKB"/>
</dbReference>
<dbReference type="GO" id="GO:0005794">
    <property type="term" value="C:Golgi apparatus"/>
    <property type="evidence" value="ECO:0000318"/>
    <property type="project" value="GO_Central"/>
</dbReference>
<dbReference type="GO" id="GO:0008375">
    <property type="term" value="F:acetylglucosaminyltransferase activity"/>
    <property type="evidence" value="ECO:0000318"/>
    <property type="project" value="GO_Central"/>
</dbReference>
<dbReference type="GO" id="GO:0050508">
    <property type="term" value="F:glucuronosyl-N-acetylglucosaminyl-proteoglycan 4-alpha-N-acetylglucosaminyltransferase activity"/>
    <property type="evidence" value="ECO:0000250"/>
    <property type="project" value="UniProtKB"/>
</dbReference>
<dbReference type="GO" id="GO:0015020">
    <property type="term" value="F:glucuronosyltransferase activity"/>
    <property type="evidence" value="ECO:0000318"/>
    <property type="project" value="GO_Central"/>
</dbReference>
<dbReference type="GO" id="GO:0046872">
    <property type="term" value="F:metal ion binding"/>
    <property type="evidence" value="ECO:0007669"/>
    <property type="project" value="UniProtKB-KW"/>
</dbReference>
<dbReference type="GO" id="GO:0050509">
    <property type="term" value="F:N-acetylglucosaminyl-proteoglycan 4-beta-glucuronosyltransferase activity"/>
    <property type="evidence" value="ECO:0000250"/>
    <property type="project" value="UniProtKB"/>
</dbReference>
<dbReference type="GO" id="GO:0015012">
    <property type="term" value="P:heparan sulfate proteoglycan biosynthetic process"/>
    <property type="evidence" value="ECO:0000250"/>
    <property type="project" value="UniProtKB"/>
</dbReference>
<dbReference type="GO" id="GO:0006486">
    <property type="term" value="P:protein glycosylation"/>
    <property type="evidence" value="ECO:0007669"/>
    <property type="project" value="UniProtKB-UniPathway"/>
</dbReference>
<dbReference type="FunFam" id="3.90.550.10:FF:000034">
    <property type="entry name" value="Exostosin 1"/>
    <property type="match status" value="1"/>
</dbReference>
<dbReference type="Gene3D" id="3.90.550.10">
    <property type="entry name" value="Spore Coat Polysaccharide Biosynthesis Protein SpsA, Chain A"/>
    <property type="match status" value="1"/>
</dbReference>
<dbReference type="InterPro" id="IPR004263">
    <property type="entry name" value="Exostosin"/>
</dbReference>
<dbReference type="InterPro" id="IPR040911">
    <property type="entry name" value="Exostosin_GT47"/>
</dbReference>
<dbReference type="InterPro" id="IPR015338">
    <property type="entry name" value="GT64_dom"/>
</dbReference>
<dbReference type="InterPro" id="IPR029044">
    <property type="entry name" value="Nucleotide-diphossugar_trans"/>
</dbReference>
<dbReference type="PANTHER" id="PTHR48261">
    <property type="entry name" value="ACETYLGLUCOSAMINYLTRANSFERASE"/>
    <property type="match status" value="1"/>
</dbReference>
<dbReference type="PANTHER" id="PTHR48261:SF3">
    <property type="entry name" value="EXOSTOSIN GLYCOSYLTRANSFERASE 1"/>
    <property type="match status" value="1"/>
</dbReference>
<dbReference type="Pfam" id="PF03016">
    <property type="entry name" value="Exostosin_GT47"/>
    <property type="match status" value="1"/>
</dbReference>
<dbReference type="Pfam" id="PF09258">
    <property type="entry name" value="Glyco_transf_64"/>
    <property type="match status" value="1"/>
</dbReference>
<dbReference type="SUPFAM" id="SSF53448">
    <property type="entry name" value="Nucleotide-diphospho-sugar transferases"/>
    <property type="match status" value="1"/>
</dbReference>
<protein>
    <recommendedName>
        <fullName>Exostosin-1b</fullName>
        <ecNumber>2.4.1.224</ecNumber>
        <ecNumber>2.4.1.225</ecNumber>
    </recommendedName>
    <alternativeName>
        <fullName>Glucuronosyl-N-acetylglucosaminyl-proteoglycan/N-acetylglucosaminyl-proteoglycan 4-alpha-N-acetylglucosaminyltransferase 1b</fullName>
    </alternativeName>
    <alternativeName>
        <fullName>Multiple exostoses protein 1 homolog b</fullName>
    </alternativeName>
</protein>
<feature type="chain" id="PRO_0000149660" description="Exostosin-1b">
    <location>
        <begin position="1"/>
        <end position="741"/>
    </location>
</feature>
<feature type="topological domain" description="Cytoplasmic" evidence="3">
    <location>
        <begin position="1"/>
        <end position="7"/>
    </location>
</feature>
<feature type="transmembrane region" description="Helical; Signal-anchor for type II membrane protein" evidence="3">
    <location>
        <begin position="8"/>
        <end position="28"/>
    </location>
</feature>
<feature type="topological domain" description="Lumenal" evidence="3">
    <location>
        <begin position="29"/>
        <end position="741"/>
    </location>
</feature>
<feature type="active site" evidence="2">
    <location>
        <position position="649"/>
    </location>
</feature>
<feature type="binding site" evidence="2">
    <location>
        <position position="435"/>
    </location>
    <ligand>
        <name>UDP-N-acetyl-alpha-D-glucosamine</name>
        <dbReference type="ChEBI" id="CHEBI:57705"/>
    </ligand>
</feature>
<feature type="binding site" evidence="2">
    <location>
        <position position="544"/>
    </location>
    <ligand>
        <name>UDP-N-acetyl-alpha-D-glucosamine</name>
        <dbReference type="ChEBI" id="CHEBI:57705"/>
    </ligand>
</feature>
<feature type="binding site" evidence="2">
    <location>
        <position position="560"/>
    </location>
    <ligand>
        <name>UDP-N-acetyl-alpha-D-glucosamine</name>
        <dbReference type="ChEBI" id="CHEBI:57705"/>
    </ligand>
</feature>
<feature type="binding site" evidence="2">
    <location>
        <position position="561"/>
    </location>
    <ligand>
        <name>UDP-N-acetyl-alpha-D-glucosamine</name>
        <dbReference type="ChEBI" id="CHEBI:57705"/>
    </ligand>
</feature>
<feature type="binding site" evidence="2">
    <location>
        <position position="562"/>
    </location>
    <ligand>
        <name>Mn(2+)</name>
        <dbReference type="ChEBI" id="CHEBI:29035"/>
        <note>catalytic</note>
    </ligand>
</feature>
<feature type="binding site" evidence="2">
    <location>
        <position position="562"/>
    </location>
    <ligand>
        <name>UDP-N-acetyl-alpha-D-glucosamine</name>
        <dbReference type="ChEBI" id="CHEBI:57705"/>
    </ligand>
</feature>
<feature type="binding site" evidence="2">
    <location>
        <position position="648"/>
    </location>
    <ligand>
        <name>UDP-N-acetyl-alpha-D-glucosamine</name>
        <dbReference type="ChEBI" id="CHEBI:57705"/>
    </ligand>
</feature>
<feature type="binding site" evidence="2">
    <location>
        <position position="649"/>
    </location>
    <ligand>
        <name>UDP-N-acetyl-alpha-D-glucosamine</name>
        <dbReference type="ChEBI" id="CHEBI:57705"/>
    </ligand>
</feature>
<feature type="binding site" evidence="2">
    <location>
        <position position="696"/>
    </location>
    <ligand>
        <name>UDP-N-acetyl-alpha-D-glucosamine</name>
        <dbReference type="ChEBI" id="CHEBI:57705"/>
    </ligand>
</feature>
<feature type="glycosylation site" description="N-linked (GlcNAc...) asparagine" evidence="3">
    <location>
        <position position="84"/>
    </location>
</feature>
<feature type="glycosylation site" description="N-linked (GlcNAc...) asparagine" evidence="3">
    <location>
        <position position="325"/>
    </location>
</feature>
<feature type="disulfide bond" evidence="2">
    <location>
        <begin position="647"/>
        <end position="699"/>
    </location>
</feature>
<sequence>MQAKKRYLISLLTGAFLVLLIYLGGGGVPGPAAPGSRSRTHGYNRPDQPWPHFSDPLQHFSPWDHSDTEDYNVHISPRQKRDVNSSVYKGKRCRMQSCFDFSLCQRNGFKVYVYPQQKGEKISESYQNILSTIEGSRFYTSDPGQACVFVLSLDTLDRDQLSPQYVHNLKTKVQSLALWNNGRNHLIFNLYSGTWPDYTEDLGFDIGQAMLAKASISTENFRPNFDISIPLFSKEHPRTGGDRGYLKYNTIPPFRKYMLVFKGKRYLTGIGSDTRNALYHVHNAEDVVLLTTCKHGKDWQKHKDARCDKDNAEYDKYDYREMLHNSTFCLVPRGRRLGSFRFLEALQAACVPVMLSNGWELPFSEVIDWNTAAVIGDERLLLQIPSTVRSIHQDKILALRQQTQFLWEAYFSSVEKIVLTTLEIIQDRVLQQSSRSSVMWNSHPGGLFSLPQYSSYLGDLPFFYAKLGIKPSPKFTAVIHAVTPLVSQSQPILKLIVSVARSQYCAQIIVLWNCDKPLPAKQRWPATAVPIIVIEGENKVMSSRFQPYESLISDAVLSLDEDTVLSTTEVDFAFTVWQSFPERIVGYPARSHFWDNNKERWGYTSKWTNDYSMVLTGAAIYHRYYHFLYTHFLPSSLKSMVDQLANCEDILMNFLVSAVTKLPPVKVTQKKQYKETMMGQSSRASRWADPDHFAQRQTCMNKFASWFGGMPLVHSQMRLDPVLFKDQVSILRKKYREIERL</sequence>
<evidence type="ECO:0000250" key="1"/>
<evidence type="ECO:0000250" key="2">
    <source>
        <dbReference type="UniProtKB" id="Q9ES89"/>
    </source>
</evidence>
<evidence type="ECO:0000255" key="3"/>
<evidence type="ECO:0000269" key="4">
    <source>
    </source>
</evidence>
<evidence type="ECO:0000305" key="5"/>
<organism>
    <name type="scientific">Danio rerio</name>
    <name type="common">Zebrafish</name>
    <name type="synonym">Brachydanio rerio</name>
    <dbReference type="NCBI Taxonomy" id="7955"/>
    <lineage>
        <taxon>Eukaryota</taxon>
        <taxon>Metazoa</taxon>
        <taxon>Chordata</taxon>
        <taxon>Craniata</taxon>
        <taxon>Vertebrata</taxon>
        <taxon>Euteleostomi</taxon>
        <taxon>Actinopterygii</taxon>
        <taxon>Neopterygii</taxon>
        <taxon>Teleostei</taxon>
        <taxon>Ostariophysi</taxon>
        <taxon>Cypriniformes</taxon>
        <taxon>Danionidae</taxon>
        <taxon>Danioninae</taxon>
        <taxon>Danio</taxon>
    </lineage>
</organism>
<proteinExistence type="evidence at transcript level"/>
<comment type="function">
    <text evidence="1">Glycosyltransferase required for the biosynthesis of heparan-sulfate.</text>
</comment>
<comment type="catalytic activity">
    <reaction>
        <text>3-O-{[(1-&gt;4)-beta-D-GlcA-(1-&gt;4)-alpha-D-GlcNAc](n)-(1-&gt;4)-beta-D-GlcA-(1-&gt;3)-beta-D-Gal-(1-&gt;3)-beta-D-Gal-(1-&gt;4)-beta-D-Xyl}-L-seryl-[protein] + UDP-N-acetyl-alpha-D-glucosamine = 3-O-{alpha-D-GlcNAc-[(1-&gt;4)-beta-D-GlcA-(1-&gt;4)-alpha-D-GlcNAc](n)-(1-&gt;4)-beta-D-GlcA-(1-&gt;3)-beta-D-Gal-(1-&gt;3)-beta-D-Gal-(1-&gt;4)-beta-D-Xyl}-L-seryl-[protein] + UDP + H(+)</text>
        <dbReference type="Rhea" id="RHEA:16213"/>
        <dbReference type="Rhea" id="RHEA-COMP:12621"/>
        <dbReference type="Rhea" id="RHEA-COMP:12623"/>
        <dbReference type="ChEBI" id="CHEBI:15378"/>
        <dbReference type="ChEBI" id="CHEBI:57705"/>
        <dbReference type="ChEBI" id="CHEBI:58223"/>
        <dbReference type="ChEBI" id="CHEBI:132415"/>
        <dbReference type="ChEBI" id="CHEBI:132416"/>
        <dbReference type="EC" id="2.4.1.224"/>
    </reaction>
</comment>
<comment type="catalytic activity">
    <reaction>
        <text>3-O-{alpha-D-GlcNAc-[(1-&gt;4)-beta-D-GlcA-(1-&gt;4)-alpha-D-GlcNAc](n)-(1-&gt;4)-beta-D-GlcA-(1-&gt;3)-beta-D-Gal-(1-&gt;3)-beta-D-Gal-(1-&gt;4)-beta-D-Xyl}-L-seryl-[protein] + UDP-alpha-D-glucuronate = 3-O-{[(1-&gt;4)-beta-D-GlcA-(1-&gt;4)-alpha-D-GlcNAc](n+1)-(1-&gt;4)-beta-D-GlcA-(1-&gt;3)-beta-D-Gal-(1-&gt;3)-beta-D-Gal-(1-&gt;4)-beta-D-Xyl}-L-seryl-[protein] + UDP + H(+)</text>
        <dbReference type="Rhea" id="RHEA:20908"/>
        <dbReference type="Rhea" id="RHEA-COMP:12623"/>
        <dbReference type="Rhea" id="RHEA-COMP:14295"/>
        <dbReference type="ChEBI" id="CHEBI:15378"/>
        <dbReference type="ChEBI" id="CHEBI:58052"/>
        <dbReference type="ChEBI" id="CHEBI:58223"/>
        <dbReference type="ChEBI" id="CHEBI:132415"/>
        <dbReference type="ChEBI" id="CHEBI:132416"/>
        <dbReference type="EC" id="2.4.1.225"/>
    </reaction>
</comment>
<comment type="cofactor">
    <cofactor evidence="2">
        <name>Mn(2+)</name>
        <dbReference type="ChEBI" id="CHEBI:29035"/>
    </cofactor>
</comment>
<comment type="pathway">
    <text>Protein modification; protein glycosylation.</text>
</comment>
<comment type="subcellular location">
    <subcellularLocation>
        <location evidence="1">Endoplasmic reticulum membrane</location>
        <topology evidence="1">Single-pass type II membrane protein</topology>
    </subcellularLocation>
</comment>
<comment type="developmental stage">
    <text evidence="4">Expressed both maternally and zygotically. During gastrulation, expressed in the embryonic midline and in the involuting mesendoderm of the germ ring. During somatogenesis, expressed in the somitic mesoderm. At the 16-somite stage, expression is highest in the tailbud region, the eye and the dorsal somites. At 24 hours-post-fertilization (hpf), expressed in the neural tube, tailbud, posterior somites and forming fin bud. At 48 hpf, expressed in the fin buds and brain.</text>
</comment>
<comment type="similarity">
    <text evidence="5">Belongs to the glycosyltransferase 47 family.</text>
</comment>
<keyword id="KW-1015">Disulfide bond</keyword>
<keyword id="KW-0256">Endoplasmic reticulum</keyword>
<keyword id="KW-0325">Glycoprotein</keyword>
<keyword id="KW-0328">Glycosyltransferase</keyword>
<keyword id="KW-0464">Manganese</keyword>
<keyword id="KW-0472">Membrane</keyword>
<keyword id="KW-0479">Metal-binding</keyword>
<keyword id="KW-1185">Reference proteome</keyword>
<keyword id="KW-0735">Signal-anchor</keyword>
<keyword id="KW-0808">Transferase</keyword>
<keyword id="KW-0812">Transmembrane</keyword>
<keyword id="KW-1133">Transmembrane helix</keyword>